<reference key="1">
    <citation type="journal article" date="1999" name="J. Bacteriol.">
        <title>Molecular characterization of type-specific capsular polysaccharide biosynthesis genes of Streptococcus agalactiae type Ia.</title>
        <authorList>
            <person name="Yamamoto S."/>
            <person name="Miyake K."/>
            <person name="Koike Y."/>
            <person name="Watanabe M."/>
            <person name="Machida Y."/>
            <person name="Ohta M."/>
            <person name="Iijima S."/>
        </authorList>
    </citation>
    <scope>NUCLEOTIDE SEQUENCE [GENOMIC DNA]</scope>
    <source>
        <strain>OI1 / Serotype Ia</strain>
    </source>
</reference>
<reference key="2">
    <citation type="journal article" date="2005" name="Proc. Natl. Acad. Sci. U.S.A.">
        <title>Genome analysis of multiple pathogenic isolates of Streptococcus agalactiae: implications for the microbial 'pan-genome'.</title>
        <authorList>
            <person name="Tettelin H."/>
            <person name="Masignani V."/>
            <person name="Cieslewicz M.J."/>
            <person name="Donati C."/>
            <person name="Medini D."/>
            <person name="Ward N.L."/>
            <person name="Angiuoli S.V."/>
            <person name="Crabtree J."/>
            <person name="Jones A.L."/>
            <person name="Durkin A.S."/>
            <person name="DeBoy R.T."/>
            <person name="Davidsen T.M."/>
            <person name="Mora M."/>
            <person name="Scarselli M."/>
            <person name="Margarit y Ros I."/>
            <person name="Peterson J.D."/>
            <person name="Hauser C.R."/>
            <person name="Sundaram J.P."/>
            <person name="Nelson W.C."/>
            <person name="Madupu R."/>
            <person name="Brinkac L.M."/>
            <person name="Dodson R.J."/>
            <person name="Rosovitz M.J."/>
            <person name="Sullivan S.A."/>
            <person name="Daugherty S.C."/>
            <person name="Haft D.H."/>
            <person name="Selengut J."/>
            <person name="Gwinn M.L."/>
            <person name="Zhou L."/>
            <person name="Zafar N."/>
            <person name="Khouri H."/>
            <person name="Radune D."/>
            <person name="Dimitrov G."/>
            <person name="Watkins K."/>
            <person name="O'Connor K.J."/>
            <person name="Smith S."/>
            <person name="Utterback T.R."/>
            <person name="White O."/>
            <person name="Rubens C.E."/>
            <person name="Grandi G."/>
            <person name="Madoff L.C."/>
            <person name="Kasper D.L."/>
            <person name="Telford J.L."/>
            <person name="Wessels M.R."/>
            <person name="Rappuoli R."/>
            <person name="Fraser C.M."/>
        </authorList>
    </citation>
    <scope>NUCLEOTIDE SEQUENCE [LARGE SCALE GENOMIC DNA]</scope>
    <source>
        <strain>ATCC 27591 / A909 / CDC SS700</strain>
    </source>
</reference>
<comment type="function">
    <text evidence="1">Dephosphorylates CpsD. Involved in the regulation of capsular polysaccharide biosynthesis (By similarity).</text>
</comment>
<comment type="catalytic activity">
    <reaction>
        <text>O-phospho-L-tyrosyl-[protein] + H2O = L-tyrosyl-[protein] + phosphate</text>
        <dbReference type="Rhea" id="RHEA:10684"/>
        <dbReference type="Rhea" id="RHEA-COMP:10136"/>
        <dbReference type="Rhea" id="RHEA-COMP:20101"/>
        <dbReference type="ChEBI" id="CHEBI:15377"/>
        <dbReference type="ChEBI" id="CHEBI:43474"/>
        <dbReference type="ChEBI" id="CHEBI:46858"/>
        <dbReference type="ChEBI" id="CHEBI:61978"/>
        <dbReference type="EC" id="3.1.3.48"/>
    </reaction>
</comment>
<comment type="cofactor">
    <cofactor evidence="1">
        <name>Mn(2+)</name>
        <dbReference type="ChEBI" id="CHEBI:29035"/>
    </cofactor>
</comment>
<comment type="pathway">
    <text>Capsule biogenesis; capsule polysaccharide biosynthesis.</text>
</comment>
<comment type="similarity">
    <text evidence="2">Belongs to the metallo-dependent hydrolases superfamily. CpsB/CapC family.</text>
</comment>
<name>CPSB_STRA1</name>
<feature type="chain" id="PRO_0000057888" description="Tyrosine-protein phosphatase CpsB">
    <location>
        <begin position="1"/>
        <end position="243"/>
    </location>
</feature>
<organism>
    <name type="scientific">Streptococcus agalactiae serotype Ia (strain ATCC 27591 / A909 / CDC SS700)</name>
    <dbReference type="NCBI Taxonomy" id="205921"/>
    <lineage>
        <taxon>Bacteria</taxon>
        <taxon>Bacillati</taxon>
        <taxon>Bacillota</taxon>
        <taxon>Bacilli</taxon>
        <taxon>Lactobacillales</taxon>
        <taxon>Streptococcaceae</taxon>
        <taxon>Streptococcus</taxon>
    </lineage>
</organism>
<gene>
    <name type="primary">cpsB</name>
    <name type="synonym">cpsIaB</name>
    <name type="ordered locus">SAK_1261</name>
</gene>
<proteinExistence type="inferred from homology"/>
<sequence>MIDIHSHIVFDVDDGPKTLEESLSLIEESYRQGVRIIVSTSHRRKGMFETPEDIIFKNFSIVKHEAEKRFEHLQILYGGELYYTSDMLEKLKLKQIPTLNNTKFALIEFSMQTSWKDIHTALSNVLMLGITPVVAHIERYNALENQKERVKEIINMGCYTQINSSHILKQKLFNDKHKRFKKRARYFLEENLVHFVASDMHNLDVRPPFLAEAYKIICRDFGKERANQLFIENAQSILKNHYI</sequence>
<protein>
    <recommendedName>
        <fullName>Tyrosine-protein phosphatase CpsB</fullName>
        <ecNumber>3.1.3.48</ecNumber>
    </recommendedName>
</protein>
<keyword id="KW-0972">Capsule biogenesis/degradation</keyword>
<keyword id="KW-0270">Exopolysaccharide synthesis</keyword>
<keyword id="KW-0378">Hydrolase</keyword>
<keyword id="KW-0464">Manganese</keyword>
<keyword id="KW-0904">Protein phosphatase</keyword>
<accession>Q3K0S8</accession>
<accession>P0A365</accession>
<accession>Q9S0S9</accession>
<dbReference type="EC" id="3.1.3.48"/>
<dbReference type="EMBL" id="AB028896">
    <property type="protein sequence ID" value="BAA82276.1"/>
    <property type="molecule type" value="Genomic_DNA"/>
</dbReference>
<dbReference type="EMBL" id="CP000114">
    <property type="protein sequence ID" value="ABA46124.1"/>
    <property type="molecule type" value="Genomic_DNA"/>
</dbReference>
<dbReference type="SMR" id="Q3K0S8"/>
<dbReference type="KEGG" id="sak:SAK_1261"/>
<dbReference type="HOGENOM" id="CLU_085966_1_0_9"/>
<dbReference type="UniPathway" id="UPA00934"/>
<dbReference type="GO" id="GO:0030145">
    <property type="term" value="F:manganese ion binding"/>
    <property type="evidence" value="ECO:0007669"/>
    <property type="project" value="InterPro"/>
</dbReference>
<dbReference type="GO" id="GO:0004725">
    <property type="term" value="F:protein tyrosine phosphatase activity"/>
    <property type="evidence" value="ECO:0007669"/>
    <property type="project" value="UniProtKB-EC"/>
</dbReference>
<dbReference type="GO" id="GO:0045227">
    <property type="term" value="P:capsule polysaccharide biosynthetic process"/>
    <property type="evidence" value="ECO:0007669"/>
    <property type="project" value="UniProtKB-UniPathway"/>
</dbReference>
<dbReference type="Gene3D" id="3.20.20.140">
    <property type="entry name" value="Metal-dependent hydrolases"/>
    <property type="match status" value="1"/>
</dbReference>
<dbReference type="InterPro" id="IPR048208">
    <property type="entry name" value="Caps_polysacc_synth_CpsB"/>
</dbReference>
<dbReference type="InterPro" id="IPR016667">
    <property type="entry name" value="Caps_polysacc_synth_CpsB/CapC"/>
</dbReference>
<dbReference type="InterPro" id="IPR032466">
    <property type="entry name" value="Metal_Hydrolase"/>
</dbReference>
<dbReference type="NCBIfam" id="NF041488">
    <property type="entry name" value="caps_synth_Cps4B"/>
    <property type="match status" value="1"/>
</dbReference>
<dbReference type="PANTHER" id="PTHR39181">
    <property type="entry name" value="TYROSINE-PROTEIN PHOSPHATASE YWQE"/>
    <property type="match status" value="1"/>
</dbReference>
<dbReference type="PANTHER" id="PTHR39181:SF1">
    <property type="entry name" value="TYROSINE-PROTEIN PHOSPHATASE YWQE"/>
    <property type="match status" value="1"/>
</dbReference>
<dbReference type="Pfam" id="PF19567">
    <property type="entry name" value="CpsB_CapC"/>
    <property type="match status" value="1"/>
</dbReference>
<dbReference type="PIRSF" id="PIRSF016557">
    <property type="entry name" value="Caps_synth_CpsB"/>
    <property type="match status" value="1"/>
</dbReference>
<dbReference type="SUPFAM" id="SSF51556">
    <property type="entry name" value="Metallo-dependent hydrolases"/>
    <property type="match status" value="1"/>
</dbReference>
<evidence type="ECO:0000250" key="1"/>
<evidence type="ECO:0000305" key="2"/>